<organism>
    <name type="scientific">Salmo salar</name>
    <name type="common">Atlantic salmon</name>
    <dbReference type="NCBI Taxonomy" id="8030"/>
    <lineage>
        <taxon>Eukaryota</taxon>
        <taxon>Metazoa</taxon>
        <taxon>Chordata</taxon>
        <taxon>Craniata</taxon>
        <taxon>Vertebrata</taxon>
        <taxon>Euteleostomi</taxon>
        <taxon>Actinopterygii</taxon>
        <taxon>Neopterygii</taxon>
        <taxon>Teleostei</taxon>
        <taxon>Protacanthopterygii</taxon>
        <taxon>Salmoniformes</taxon>
        <taxon>Salmonidae</taxon>
        <taxon>Salmoninae</taxon>
        <taxon>Salmo</taxon>
    </lineage>
</organism>
<evidence type="ECO:0000250" key="1">
    <source>
        <dbReference type="UniProtKB" id="Q07020"/>
    </source>
</evidence>
<evidence type="ECO:0000250" key="2">
    <source>
        <dbReference type="UniProtKB" id="Q95342"/>
    </source>
</evidence>
<evidence type="ECO:0000305" key="3"/>
<accession>P24558</accession>
<name>RL18_SALSA</name>
<keyword id="KW-0963">Cytoplasm</keyword>
<keyword id="KW-0256">Endoplasmic reticulum</keyword>
<keyword id="KW-1185">Reference proteome</keyword>
<keyword id="KW-0687">Ribonucleoprotein</keyword>
<keyword id="KW-0689">Ribosomal protein</keyword>
<proteinExistence type="evidence at transcript level"/>
<comment type="function">
    <text evidence="1">Component of the large ribosomal subunit. The ribosome is a large ribonucleoprotein complex responsible for the synthesis of proteins in the cell.</text>
</comment>
<comment type="subunit">
    <text evidence="1">Component of the large ribosomal subunit.</text>
</comment>
<comment type="subcellular location">
    <subcellularLocation>
        <location evidence="1">Cytoplasm</location>
        <location evidence="1">Cytosol</location>
    </subcellularLocation>
    <subcellularLocation>
        <location evidence="1">Cytoplasm</location>
    </subcellularLocation>
    <subcellularLocation>
        <location evidence="2">Rough endoplasmic reticulum</location>
    </subcellularLocation>
    <text evidence="1 2">Detected on cytosolic polysomes (By similarity). Detected in ribosomes that are associated with the rough endoplasmic reticulum (By similarity).</text>
</comment>
<comment type="similarity">
    <text evidence="3">Belongs to the eukaryotic ribosomal protein eL18 family.</text>
</comment>
<feature type="chain" id="PRO_0000132778" description="Large ribosomal subunit protein eL18">
    <location>
        <begin position="1"/>
        <end position="179"/>
    </location>
</feature>
<protein>
    <recommendedName>
        <fullName evidence="3">Large ribosomal subunit protein eL18</fullName>
    </recommendedName>
    <alternativeName>
        <fullName>60S ribosomal protein L18</fullName>
    </alternativeName>
</protein>
<dbReference type="EMBL" id="X52238">
    <property type="protein sequence ID" value="CAA36483.1"/>
    <property type="molecule type" value="mRNA"/>
</dbReference>
<dbReference type="PIR" id="JQ1003">
    <property type="entry name" value="R5ON18"/>
</dbReference>
<dbReference type="RefSeq" id="NP_001117136.1">
    <property type="nucleotide sequence ID" value="NM_001123664.1"/>
</dbReference>
<dbReference type="SMR" id="P24558"/>
<dbReference type="GeneID" id="100136574"/>
<dbReference type="KEGG" id="sasa:100136574"/>
<dbReference type="CTD" id="6141"/>
<dbReference type="Proteomes" id="UP000087266">
    <property type="component" value="Unplaced"/>
</dbReference>
<dbReference type="GO" id="GO:0022625">
    <property type="term" value="C:cytosolic large ribosomal subunit"/>
    <property type="evidence" value="ECO:0000250"/>
    <property type="project" value="UniProtKB"/>
</dbReference>
<dbReference type="GO" id="GO:0005791">
    <property type="term" value="C:rough endoplasmic reticulum"/>
    <property type="evidence" value="ECO:0007669"/>
    <property type="project" value="UniProtKB-SubCell"/>
</dbReference>
<dbReference type="GO" id="GO:0003723">
    <property type="term" value="F:RNA binding"/>
    <property type="evidence" value="ECO:0007669"/>
    <property type="project" value="TreeGrafter"/>
</dbReference>
<dbReference type="GO" id="GO:0003735">
    <property type="term" value="F:structural constituent of ribosome"/>
    <property type="evidence" value="ECO:0007669"/>
    <property type="project" value="InterPro"/>
</dbReference>
<dbReference type="GO" id="GO:0002181">
    <property type="term" value="P:cytoplasmic translation"/>
    <property type="evidence" value="ECO:0000250"/>
    <property type="project" value="UniProtKB"/>
</dbReference>
<dbReference type="Gene3D" id="3.100.10.10">
    <property type="match status" value="1"/>
</dbReference>
<dbReference type="InterPro" id="IPR000039">
    <property type="entry name" value="Ribosomal_eL18"/>
</dbReference>
<dbReference type="InterPro" id="IPR021132">
    <property type="entry name" value="Ribosomal_eL18/eL18-A/B/_CS"/>
</dbReference>
<dbReference type="InterPro" id="IPR021131">
    <property type="entry name" value="Ribosomal_uL15/eL18"/>
</dbReference>
<dbReference type="InterPro" id="IPR036227">
    <property type="entry name" value="Ribosomal_uL15/eL18_sf"/>
</dbReference>
<dbReference type="PANTHER" id="PTHR10934">
    <property type="entry name" value="60S RIBOSOMAL PROTEIN L18"/>
    <property type="match status" value="1"/>
</dbReference>
<dbReference type="PANTHER" id="PTHR10934:SF2">
    <property type="entry name" value="LARGE RIBOSOMAL SUBUNIT PROTEIN EL18"/>
    <property type="match status" value="1"/>
</dbReference>
<dbReference type="Pfam" id="PF17135">
    <property type="entry name" value="Ribosomal_L18"/>
    <property type="match status" value="1"/>
</dbReference>
<dbReference type="SUPFAM" id="SSF52080">
    <property type="entry name" value="Ribosomal proteins L15p and L18e"/>
    <property type="match status" value="1"/>
</dbReference>
<dbReference type="PROSITE" id="PS01106">
    <property type="entry name" value="RIBOSOMAL_L18E"/>
    <property type="match status" value="1"/>
</dbReference>
<reference key="1">
    <citation type="journal article" date="1991" name="Gene">
        <title>Sequence of a cDNA clone encoding an Atlantic salmon ribosomal protein.</title>
        <authorList>
            <person name="Powell R."/>
            <person name="Byrnes L."/>
            <person name="Gannon F."/>
        </authorList>
    </citation>
    <scope>NUCLEOTIDE SEQUENCE [MRNA]</scope>
</reference>
<sequence>MGIVIQHNKDRLVRPKQPLSEDITLLVKIYRLPGSKCSTAPFNKVVLRRLFMSRTHRPPMSVSRMIRKMKLPGRENRTAVVVGTVTDDVRIHEIPNLKVSALKITRRNRTRILKFVQIMRFVGLALAAPNRQKSVLLSAPRNARDVSRHFANAPSIPHTKPYVLSNKLRRRGSKLTYNN</sequence>
<gene>
    <name type="primary">rpl18</name>
</gene>